<name>Y6560_BRADU</name>
<reference key="1">
    <citation type="journal article" date="2002" name="DNA Res.">
        <title>Complete genomic sequence of nitrogen-fixing symbiotic bacterium Bradyrhizobium japonicum USDA110.</title>
        <authorList>
            <person name="Kaneko T."/>
            <person name="Nakamura Y."/>
            <person name="Sato S."/>
            <person name="Minamisawa K."/>
            <person name="Uchiumi T."/>
            <person name="Sasamoto S."/>
            <person name="Watanabe A."/>
            <person name="Idesawa K."/>
            <person name="Iriguchi M."/>
            <person name="Kawashima K."/>
            <person name="Kohara M."/>
            <person name="Matsumoto M."/>
            <person name="Shimpo S."/>
            <person name="Tsuruoka H."/>
            <person name="Wada T."/>
            <person name="Yamada M."/>
            <person name="Tabata S."/>
        </authorList>
    </citation>
    <scope>NUCLEOTIDE SEQUENCE [LARGE SCALE GENOMIC DNA]</scope>
    <source>
        <strain>JCM 10833 / BCRC 13528 / IAM 13628 / NBRC 14792 / USDA 110</strain>
    </source>
</reference>
<dbReference type="EMBL" id="BA000040">
    <property type="protein sequence ID" value="BAC51825.1"/>
    <property type="molecule type" value="Genomic_DNA"/>
</dbReference>
<dbReference type="RefSeq" id="NP_773200.1">
    <property type="nucleotide sequence ID" value="NC_004463.1"/>
</dbReference>
<dbReference type="RefSeq" id="WP_011089300.1">
    <property type="nucleotide sequence ID" value="NZ_CP011360.1"/>
</dbReference>
<dbReference type="FunCoup" id="Q89FY8">
    <property type="interactions" value="4"/>
</dbReference>
<dbReference type="STRING" id="224911.AAV28_30375"/>
<dbReference type="EnsemblBacteria" id="BAC51825">
    <property type="protein sequence ID" value="BAC51825"/>
    <property type="gene ID" value="BAC51825"/>
</dbReference>
<dbReference type="KEGG" id="bja:bsl6560"/>
<dbReference type="PATRIC" id="fig|224911.44.peg.6568"/>
<dbReference type="eggNOG" id="COG5487">
    <property type="taxonomic scope" value="Bacteria"/>
</dbReference>
<dbReference type="HOGENOM" id="CLU_187346_2_1_5"/>
<dbReference type="InParanoid" id="Q89FY8"/>
<dbReference type="OrthoDB" id="1374391at2"/>
<dbReference type="PRO" id="PR:Q89FY8"/>
<dbReference type="Proteomes" id="UP000002526">
    <property type="component" value="Chromosome"/>
</dbReference>
<dbReference type="GO" id="GO:0005886">
    <property type="term" value="C:plasma membrane"/>
    <property type="evidence" value="ECO:0007669"/>
    <property type="project" value="UniProtKB-SubCell"/>
</dbReference>
<dbReference type="HAMAP" id="MF_01361">
    <property type="entry name" value="UPF0391"/>
    <property type="match status" value="1"/>
</dbReference>
<dbReference type="InterPro" id="IPR009760">
    <property type="entry name" value="DUF1328"/>
</dbReference>
<dbReference type="NCBIfam" id="NF010226">
    <property type="entry name" value="PRK13682.1-1"/>
    <property type="match status" value="1"/>
</dbReference>
<dbReference type="NCBIfam" id="NF010228">
    <property type="entry name" value="PRK13682.1-3"/>
    <property type="match status" value="1"/>
</dbReference>
<dbReference type="NCBIfam" id="NF010229">
    <property type="entry name" value="PRK13682.1-4"/>
    <property type="match status" value="1"/>
</dbReference>
<dbReference type="Pfam" id="PF07043">
    <property type="entry name" value="DUF1328"/>
    <property type="match status" value="1"/>
</dbReference>
<dbReference type="PIRSF" id="PIRSF036466">
    <property type="entry name" value="UCP036466"/>
    <property type="match status" value="1"/>
</dbReference>
<sequence length="57" mass="5915">MLGWVVTFLVIALIAGILGFGGIAGASIEIAKIIFFIAVVLFLVSAVVGLARGRTRI</sequence>
<comment type="subcellular location">
    <subcellularLocation>
        <location evidence="1">Cell membrane</location>
        <topology evidence="1">Multi-pass membrane protein</topology>
    </subcellularLocation>
</comment>
<comment type="similarity">
    <text evidence="1">Belongs to the UPF0391 family.</text>
</comment>
<organism>
    <name type="scientific">Bradyrhizobium diazoefficiens (strain JCM 10833 / BCRC 13528 / IAM 13628 / NBRC 14792 / USDA 110)</name>
    <dbReference type="NCBI Taxonomy" id="224911"/>
    <lineage>
        <taxon>Bacteria</taxon>
        <taxon>Pseudomonadati</taxon>
        <taxon>Pseudomonadota</taxon>
        <taxon>Alphaproteobacteria</taxon>
        <taxon>Hyphomicrobiales</taxon>
        <taxon>Nitrobacteraceae</taxon>
        <taxon>Bradyrhizobium</taxon>
    </lineage>
</organism>
<protein>
    <recommendedName>
        <fullName evidence="1">UPF0391 membrane protein bsl6560</fullName>
    </recommendedName>
</protein>
<accession>Q89FY8</accession>
<gene>
    <name type="ordered locus">bsl6560</name>
</gene>
<proteinExistence type="inferred from homology"/>
<keyword id="KW-1003">Cell membrane</keyword>
<keyword id="KW-0472">Membrane</keyword>
<keyword id="KW-1185">Reference proteome</keyword>
<keyword id="KW-0812">Transmembrane</keyword>
<keyword id="KW-1133">Transmembrane helix</keyword>
<feature type="chain" id="PRO_0000256717" description="UPF0391 membrane protein bsl6560">
    <location>
        <begin position="1"/>
        <end position="57"/>
    </location>
</feature>
<feature type="transmembrane region" description="Helical" evidence="1">
    <location>
        <begin position="4"/>
        <end position="24"/>
    </location>
</feature>
<feature type="transmembrane region" description="Helical" evidence="1">
    <location>
        <begin position="30"/>
        <end position="50"/>
    </location>
</feature>
<evidence type="ECO:0000255" key="1">
    <source>
        <dbReference type="HAMAP-Rule" id="MF_01361"/>
    </source>
</evidence>